<protein>
    <recommendedName>
        <fullName>Exportin-2</fullName>
        <shortName>Exp2</shortName>
    </recommendedName>
    <alternativeName>
        <fullName>Chromosome segregation 1-like protein</fullName>
    </alternativeName>
    <alternativeName>
        <fullName>Importin-alpha re-exporter</fullName>
    </alternativeName>
</protein>
<evidence type="ECO:0000250" key="1">
    <source>
        <dbReference type="UniProtKB" id="P55060"/>
    </source>
</evidence>
<evidence type="ECO:0000255" key="2">
    <source>
        <dbReference type="PROSITE-ProRule" id="PRU00115"/>
    </source>
</evidence>
<evidence type="ECO:0000305" key="3"/>
<keyword id="KW-0007">Acetylation</keyword>
<keyword id="KW-0963">Cytoplasm</keyword>
<keyword id="KW-0539">Nucleus</keyword>
<keyword id="KW-0597">Phosphoprotein</keyword>
<keyword id="KW-0653">Protein transport</keyword>
<keyword id="KW-1185">Reference proteome</keyword>
<keyword id="KW-0813">Transport</keyword>
<proteinExistence type="evidence at transcript level"/>
<reference key="1">
    <citation type="submission" date="2007-04" db="EMBL/GenBank/DDBJ databases">
        <authorList>
            <consortium name="NIH - Mammalian Gene Collection (MGC) project"/>
        </authorList>
    </citation>
    <scope>NUCLEOTIDE SEQUENCE [LARGE SCALE MRNA]</scope>
    <source>
        <strain>Hereford</strain>
        <tissue>Hypothalamus</tissue>
    </source>
</reference>
<dbReference type="EMBL" id="BC140465">
    <property type="protein sequence ID" value="AAI40466.1"/>
    <property type="molecule type" value="mRNA"/>
</dbReference>
<dbReference type="RefSeq" id="NP_001014933.2">
    <property type="nucleotide sequence ID" value="NM_001014933.3"/>
</dbReference>
<dbReference type="SMR" id="A5D785"/>
<dbReference type="FunCoup" id="A5D785">
    <property type="interactions" value="2988"/>
</dbReference>
<dbReference type="STRING" id="9913.ENSBTAP00000047927"/>
<dbReference type="PaxDb" id="9913-ENSBTAP00000047927"/>
<dbReference type="PeptideAtlas" id="A5D785"/>
<dbReference type="GeneID" id="518622"/>
<dbReference type="KEGG" id="bta:518622"/>
<dbReference type="CTD" id="1434"/>
<dbReference type="eggNOG" id="KOG1992">
    <property type="taxonomic scope" value="Eukaryota"/>
</dbReference>
<dbReference type="InParanoid" id="A5D785"/>
<dbReference type="OrthoDB" id="3268246at2759"/>
<dbReference type="Proteomes" id="UP000009136">
    <property type="component" value="Unplaced"/>
</dbReference>
<dbReference type="GO" id="GO:0005829">
    <property type="term" value="C:cytosol"/>
    <property type="evidence" value="ECO:0000318"/>
    <property type="project" value="GO_Central"/>
</dbReference>
<dbReference type="GO" id="GO:0005635">
    <property type="term" value="C:nuclear envelope"/>
    <property type="evidence" value="ECO:0000318"/>
    <property type="project" value="GO_Central"/>
</dbReference>
<dbReference type="GO" id="GO:0005049">
    <property type="term" value="F:nuclear export signal receptor activity"/>
    <property type="evidence" value="ECO:0000318"/>
    <property type="project" value="GO_Central"/>
</dbReference>
<dbReference type="GO" id="GO:0031267">
    <property type="term" value="F:small GTPase binding"/>
    <property type="evidence" value="ECO:0007669"/>
    <property type="project" value="InterPro"/>
</dbReference>
<dbReference type="GO" id="GO:0006611">
    <property type="term" value="P:protein export from nucleus"/>
    <property type="evidence" value="ECO:0000318"/>
    <property type="project" value="GO_Central"/>
</dbReference>
<dbReference type="GO" id="GO:0006606">
    <property type="term" value="P:protein import into nucleus"/>
    <property type="evidence" value="ECO:0000318"/>
    <property type="project" value="GO_Central"/>
</dbReference>
<dbReference type="FunFam" id="1.25.10.10:FF:000057">
    <property type="entry name" value="Exportin-2 isoform 1"/>
    <property type="match status" value="1"/>
</dbReference>
<dbReference type="Gene3D" id="1.25.10.10">
    <property type="entry name" value="Leucine-rich Repeat Variant"/>
    <property type="match status" value="1"/>
</dbReference>
<dbReference type="InterPro" id="IPR011989">
    <property type="entry name" value="ARM-like"/>
</dbReference>
<dbReference type="InterPro" id="IPR016024">
    <property type="entry name" value="ARM-type_fold"/>
</dbReference>
<dbReference type="InterPro" id="IPR001494">
    <property type="entry name" value="Importin-beta_N"/>
</dbReference>
<dbReference type="InterPro" id="IPR005043">
    <property type="entry name" value="XPO2_C"/>
</dbReference>
<dbReference type="InterPro" id="IPR013713">
    <property type="entry name" value="XPO2_central"/>
</dbReference>
<dbReference type="PANTHER" id="PTHR10997:SF8">
    <property type="entry name" value="EXPORTIN-2"/>
    <property type="match status" value="1"/>
</dbReference>
<dbReference type="PANTHER" id="PTHR10997">
    <property type="entry name" value="IMPORTIN-7, 8, 11"/>
    <property type="match status" value="1"/>
</dbReference>
<dbReference type="Pfam" id="PF03378">
    <property type="entry name" value="CAS_CSE1"/>
    <property type="match status" value="1"/>
</dbReference>
<dbReference type="Pfam" id="PF08506">
    <property type="entry name" value="Cse1"/>
    <property type="match status" value="1"/>
</dbReference>
<dbReference type="Pfam" id="PF03810">
    <property type="entry name" value="IBN_N"/>
    <property type="match status" value="1"/>
</dbReference>
<dbReference type="SMART" id="SM00913">
    <property type="entry name" value="IBN_N"/>
    <property type="match status" value="1"/>
</dbReference>
<dbReference type="SUPFAM" id="SSF48371">
    <property type="entry name" value="ARM repeat"/>
    <property type="match status" value="1"/>
</dbReference>
<dbReference type="PROSITE" id="PS50166">
    <property type="entry name" value="IMPORTIN_B_NT"/>
    <property type="match status" value="1"/>
</dbReference>
<sequence length="971" mass="110375">MELSDANLQTLTEYLKKTLDPDPAIRRPAEKFLESVEGNQNYPLLLLTLLEKSQDNVIKVCASVTFKNYIKRNWRIVEDEPNKICEADRVAIKANIVHLMLSSPEQIQKQLSDAISIIGREDFPQKWPDLLTEMVNRFQSGDFHVINGVLRTAHSLFKRYRHEFKSNELWTEIKLVLDAFALPLTNLFKATIELCSTHANDASALRILFSSLILISKLFYSLNFQDLPEFFEDNMETWMNNFHTLLTLDNKLLQTDDEEEAGLLELLKSQICDNAALYAQKYDEEFQRYLPRFVTAIWNLLVTTGQEVKYDLLVSNAIQFLASVCERPHYKNLFEDQNTLTSICEKVIVPNMEFRAADEEAFEDNSEEYIRRDLEGSDIDTRRRAACDLVRGLCKFFEGPVTGIFSGYVNSMLQEYAKNPSVNWKHKDAAIYLVTSLASKAQTQKHGITQANELVNLTEFFVNHILPDLKSANVNEFPVLKADGIKYITIFRNQVPKEHLLVSIPLLINHLQAESIVVHTYAAHALERLFTMRGPNSATLFTAAEIAPFVEILLTNLFKALTLPGSSENEYIMKAIMRSFSLLQEAIIPYIPTLITQLTQKLLAVSKNPSKPHFNHYMFEAICLSIRITCKSNPAAVVNFEEALFLVFTEILQNDVQEFIPYVFQVMSLLLETHKNDIPSSYMALFPHLLQPVLWERTGNIPALVRLLQAFLERGSNTIASAAADKIPGLLGVFQKLIASKANDHQGFYLLNSIIEHMPPESVDQYRKQIFILLFQRLQNSKTTKFIKSFLVFINLYCIKYGALALQEIFDGIQPKMFGMVLEKIIIPEIQKVSGNVEKKICAVGITKLLTECPPMMDTEYTKLWTPLLQSLIGLFELPEDDTIPDEEHFIDIEDTPGYQTAFSQLAFAGKKEHDPVGQMVNNPKIHLAQSLHKLSTACPGRVPSMVSTSLNAEALQYLQGYLQAASVTLL</sequence>
<name>XPO2_BOVIN</name>
<feature type="chain" id="PRO_0000342152" description="Exportin-2">
    <location>
        <begin position="1"/>
        <end position="971"/>
    </location>
</feature>
<feature type="domain" description="Importin N-terminal" evidence="2">
    <location>
        <begin position="29"/>
        <end position="102"/>
    </location>
</feature>
<feature type="modified residue" description="N-acetylmethionine" evidence="1">
    <location>
        <position position="1"/>
    </location>
</feature>
<feature type="modified residue" description="Phosphoserine" evidence="1">
    <location>
        <position position="112"/>
    </location>
</feature>
<feature type="modified residue" description="N6-acetyllysine" evidence="1">
    <location>
        <position position="574"/>
    </location>
</feature>
<feature type="modified residue" description="N6-acetyllysine" evidence="1">
    <location>
        <position position="824"/>
    </location>
</feature>
<feature type="modified residue" description="Phosphoserine" evidence="1">
    <location>
        <position position="931"/>
    </location>
</feature>
<organism>
    <name type="scientific">Bos taurus</name>
    <name type="common">Bovine</name>
    <dbReference type="NCBI Taxonomy" id="9913"/>
    <lineage>
        <taxon>Eukaryota</taxon>
        <taxon>Metazoa</taxon>
        <taxon>Chordata</taxon>
        <taxon>Craniata</taxon>
        <taxon>Vertebrata</taxon>
        <taxon>Euteleostomi</taxon>
        <taxon>Mammalia</taxon>
        <taxon>Eutheria</taxon>
        <taxon>Laurasiatheria</taxon>
        <taxon>Artiodactyla</taxon>
        <taxon>Ruminantia</taxon>
        <taxon>Pecora</taxon>
        <taxon>Bovidae</taxon>
        <taxon>Bovinae</taxon>
        <taxon>Bos</taxon>
    </lineage>
</organism>
<comment type="function">
    <text evidence="1">Export receptor for importin-alpha. Mediates importin-alpha re-export from the nucleus to the cytoplasm after import substrates (cargos) have been released into the nucleoplasm. In the nucleus binds cooperatively to importin-alpha and to the GTPase Ran in its active GTP-bound form. Docking of this trimeric complex to the nuclear pore complex (NPC) is mediated through binding to nucleoporins. Upon transit of a nuclear export complex into the cytoplasm, disassembling of the complex and hydrolysis of Ran-GTP to Ran-GDP (induced by RANBP1 and RANGAP1, respectively) cause release of the importin-alpha from the export receptor. CSE1L/XPO2 then return to the nuclear compartment and mediate another round of transport. The directionality of nuclear export is thought to be conferred by an asymmetric distribution of the GTP- and GDP-bound forms of Ran between the cytoplasm and nucleus.</text>
</comment>
<comment type="subunit">
    <text evidence="1">Found in a complex with CSE1L/XPO2, Ran and KPNA2. Binds with high affinity to importin-alpha only in the presence of RanGTP. The complex is dissociated by the combined action of RanBP1 and RanGAP1. Interacts with CFTR.</text>
</comment>
<comment type="subcellular location">
    <subcellularLocation>
        <location evidence="1">Cytoplasm</location>
    </subcellularLocation>
    <subcellularLocation>
        <location evidence="1">Nucleus</location>
    </subcellularLocation>
    <text evidence="1">Shuttles between the nucleus and the cytoplasm.</text>
</comment>
<comment type="similarity">
    <text evidence="3">Belongs to the XPO2/CSE1 family.</text>
</comment>
<accession>A5D785</accession>
<gene>
    <name type="primary">CSE1L</name>
    <name type="synonym">XPO2</name>
</gene>